<accession>P65727</accession>
<accession>A0A1R3XU35</accession>
<accession>P71585</accession>
<accession>X2BDS0</accession>
<protein>
    <recommendedName>
        <fullName>Serine/threonine-protein kinase PknA</fullName>
        <ecNumber>2.7.11.1</ecNumber>
    </recommendedName>
</protein>
<gene>
    <name type="primary">pknA</name>
    <name type="ordered locus">BQ2027_MB0015C</name>
</gene>
<feature type="chain" id="PRO_0000171203" description="Serine/threonine-protein kinase PknA">
    <location>
        <begin position="1"/>
        <end position="431"/>
    </location>
</feature>
<feature type="topological domain" description="Cytoplasmic" evidence="3">
    <location>
        <begin position="1"/>
        <end position="339"/>
    </location>
</feature>
<feature type="transmembrane region" description="Helical" evidence="3">
    <location>
        <begin position="340"/>
        <end position="360"/>
    </location>
</feature>
<feature type="topological domain" description="Extracellular" evidence="3">
    <location>
        <begin position="361"/>
        <end position="431"/>
    </location>
</feature>
<feature type="domain" description="Protein kinase" evidence="4">
    <location>
        <begin position="13"/>
        <end position="272"/>
    </location>
</feature>
<feature type="region of interest" description="Disordered" evidence="6">
    <location>
        <begin position="276"/>
        <end position="333"/>
    </location>
</feature>
<feature type="region of interest" description="Disordered" evidence="6">
    <location>
        <begin position="366"/>
        <end position="418"/>
    </location>
</feature>
<feature type="compositionally biased region" description="Pro residues" evidence="6">
    <location>
        <begin position="282"/>
        <end position="291"/>
    </location>
</feature>
<feature type="compositionally biased region" description="Low complexity" evidence="6">
    <location>
        <begin position="292"/>
        <end position="314"/>
    </location>
</feature>
<feature type="compositionally biased region" description="Low complexity" evidence="6">
    <location>
        <begin position="368"/>
        <end position="384"/>
    </location>
</feature>
<feature type="active site" description="Proton acceptor" evidence="4 5">
    <location>
        <position position="141"/>
    </location>
</feature>
<feature type="binding site" evidence="4">
    <location>
        <begin position="19"/>
        <end position="27"/>
    </location>
    <ligand>
        <name>ATP</name>
        <dbReference type="ChEBI" id="CHEBI:30616"/>
    </ligand>
</feature>
<feature type="binding site" evidence="4">
    <location>
        <position position="42"/>
    </location>
    <ligand>
        <name>ATP</name>
        <dbReference type="ChEBI" id="CHEBI:30616"/>
    </ligand>
</feature>
<keyword id="KW-0067">ATP-binding</keyword>
<keyword id="KW-1003">Cell membrane</keyword>
<keyword id="KW-0418">Kinase</keyword>
<keyword id="KW-0472">Membrane</keyword>
<keyword id="KW-0547">Nucleotide-binding</keyword>
<keyword id="KW-0597">Phosphoprotein</keyword>
<keyword id="KW-1185">Reference proteome</keyword>
<keyword id="KW-0723">Serine/threonine-protein kinase</keyword>
<keyword id="KW-0808">Transferase</keyword>
<keyword id="KW-0812">Transmembrane</keyword>
<keyword id="KW-1133">Transmembrane helix</keyword>
<reference key="1">
    <citation type="journal article" date="2003" name="Proc. Natl. Acad. Sci. U.S.A.">
        <title>The complete genome sequence of Mycobacterium bovis.</title>
        <authorList>
            <person name="Garnier T."/>
            <person name="Eiglmeier K."/>
            <person name="Camus J.-C."/>
            <person name="Medina N."/>
            <person name="Mansoor H."/>
            <person name="Pryor M."/>
            <person name="Duthoy S."/>
            <person name="Grondin S."/>
            <person name="Lacroix C."/>
            <person name="Monsempe C."/>
            <person name="Simon S."/>
            <person name="Harris B."/>
            <person name="Atkin R."/>
            <person name="Doggett J."/>
            <person name="Mayes R."/>
            <person name="Keating L."/>
            <person name="Wheeler P.R."/>
            <person name="Parkhill J."/>
            <person name="Barrell B.G."/>
            <person name="Cole S.T."/>
            <person name="Gordon S.V."/>
            <person name="Hewinson R.G."/>
        </authorList>
    </citation>
    <scope>NUCLEOTIDE SEQUENCE [LARGE SCALE GENOMIC DNA]</scope>
    <source>
        <strain>ATCC BAA-935 / AF2122/97</strain>
    </source>
</reference>
<reference key="2">
    <citation type="journal article" date="2017" name="Genome Announc.">
        <title>Updated reference genome sequence and annotation of Mycobacterium bovis AF2122/97.</title>
        <authorList>
            <person name="Malone K.M."/>
            <person name="Farrell D."/>
            <person name="Stuber T.P."/>
            <person name="Schubert O.T."/>
            <person name="Aebersold R."/>
            <person name="Robbe-Austerman S."/>
            <person name="Gordon S.V."/>
        </authorList>
    </citation>
    <scope>NUCLEOTIDE SEQUENCE [LARGE SCALE GENOMIC DNA]</scope>
    <scope>GENOME REANNOTATION</scope>
    <source>
        <strain>ATCC BAA-935 / AF2122/97</strain>
    </source>
</reference>
<proteinExistence type="inferred from homology"/>
<evidence type="ECO:0000250" key="1"/>
<evidence type="ECO:0000250" key="2">
    <source>
        <dbReference type="UniProtKB" id="P9WI83"/>
    </source>
</evidence>
<evidence type="ECO:0000255" key="3"/>
<evidence type="ECO:0000255" key="4">
    <source>
        <dbReference type="PROSITE-ProRule" id="PRU00159"/>
    </source>
</evidence>
<evidence type="ECO:0000255" key="5">
    <source>
        <dbReference type="PROSITE-ProRule" id="PRU10027"/>
    </source>
</evidence>
<evidence type="ECO:0000256" key="6">
    <source>
        <dbReference type="SAM" id="MobiDB-lite"/>
    </source>
</evidence>
<name>PKNA_MYCBO</name>
<sequence>MSPRVGVTLSGRYRLQRLIATGGMGQVWEAVDNRLGRRVAVKVLKSEFSSDPEFIERFRAEARTTAMLNHPGIASVHDYGESQMNGEGRTAYLVMELVNGEPLNSVLKRTGRLSLRHALDMLEQTGRALQIAHAAGLVHRDVKPGNILITPTGQVKITDFGIAKAVDAAPVTQTGMVMGTAQYIAPEQALGHDASPASDVYSLGVVGYEAVSGKRPFAGDGALTVAMKHIKEPPPPLPPDLPPNVRELIEITLVKNPAMRYRSGGPFADAVAAVRAGRRPPRPSQTPPPGRAAPAAIPSGTTARVAANSAGRTAASRRSRPATGGHRPPRRTFSSGQRALLWAAGVLGALAIIIAVLLVIKAPGDNSPQQAPTPTVTTTGNPPASNTGGTDASPRLNWTERGETRHSGLQSWVVPPTPHSRASLARYEIAQ</sequence>
<comment type="function">
    <text evidence="2">Protein kinase that regulates many aspects of mycobacterial physiology. Is a key component of a signal transduction pathway that regulates cell growth, cell shape and cell division via phosphorylation of target proteins.</text>
</comment>
<comment type="catalytic activity">
    <reaction>
        <text>L-seryl-[protein] + ATP = O-phospho-L-seryl-[protein] + ADP + H(+)</text>
        <dbReference type="Rhea" id="RHEA:17989"/>
        <dbReference type="Rhea" id="RHEA-COMP:9863"/>
        <dbReference type="Rhea" id="RHEA-COMP:11604"/>
        <dbReference type="ChEBI" id="CHEBI:15378"/>
        <dbReference type="ChEBI" id="CHEBI:29999"/>
        <dbReference type="ChEBI" id="CHEBI:30616"/>
        <dbReference type="ChEBI" id="CHEBI:83421"/>
        <dbReference type="ChEBI" id="CHEBI:456216"/>
        <dbReference type="EC" id="2.7.11.1"/>
    </reaction>
</comment>
<comment type="catalytic activity">
    <reaction>
        <text>L-threonyl-[protein] + ATP = O-phospho-L-threonyl-[protein] + ADP + H(+)</text>
        <dbReference type="Rhea" id="RHEA:46608"/>
        <dbReference type="Rhea" id="RHEA-COMP:11060"/>
        <dbReference type="Rhea" id="RHEA-COMP:11605"/>
        <dbReference type="ChEBI" id="CHEBI:15378"/>
        <dbReference type="ChEBI" id="CHEBI:30013"/>
        <dbReference type="ChEBI" id="CHEBI:30616"/>
        <dbReference type="ChEBI" id="CHEBI:61977"/>
        <dbReference type="ChEBI" id="CHEBI:456216"/>
        <dbReference type="EC" id="2.7.11.1"/>
    </reaction>
</comment>
<comment type="subcellular location">
    <subcellularLocation>
        <location evidence="1">Cell membrane</location>
        <topology evidence="1">Single-pass membrane protein</topology>
    </subcellularLocation>
</comment>
<comment type="PTM">
    <text evidence="1">Autophosphorylated.</text>
</comment>
<comment type="similarity">
    <text evidence="4">Belongs to the protein kinase superfamily. Ser/Thr protein kinase family.</text>
</comment>
<dbReference type="EC" id="2.7.11.1"/>
<dbReference type="EMBL" id="LT708304">
    <property type="protein sequence ID" value="SIT98360.1"/>
    <property type="molecule type" value="Genomic_DNA"/>
</dbReference>
<dbReference type="RefSeq" id="NP_853685.1">
    <property type="nucleotide sequence ID" value="NC_002945.3"/>
</dbReference>
<dbReference type="RefSeq" id="WP_003400358.1">
    <property type="nucleotide sequence ID" value="NC_002945.4"/>
</dbReference>
<dbReference type="SMR" id="P65727"/>
<dbReference type="GeneID" id="45423974"/>
<dbReference type="KEGG" id="mbo:BQ2027_MB0015C"/>
<dbReference type="PATRIC" id="fig|233413.5.peg.19"/>
<dbReference type="Proteomes" id="UP000001419">
    <property type="component" value="Chromosome"/>
</dbReference>
<dbReference type="GO" id="GO:0005886">
    <property type="term" value="C:plasma membrane"/>
    <property type="evidence" value="ECO:0007669"/>
    <property type="project" value="UniProtKB-SubCell"/>
</dbReference>
<dbReference type="GO" id="GO:0005524">
    <property type="term" value="F:ATP binding"/>
    <property type="evidence" value="ECO:0007669"/>
    <property type="project" value="UniProtKB-KW"/>
</dbReference>
<dbReference type="GO" id="GO:0106310">
    <property type="term" value="F:protein serine kinase activity"/>
    <property type="evidence" value="ECO:0007669"/>
    <property type="project" value="RHEA"/>
</dbReference>
<dbReference type="GO" id="GO:0004674">
    <property type="term" value="F:protein serine/threonine kinase activity"/>
    <property type="evidence" value="ECO:0007669"/>
    <property type="project" value="UniProtKB-KW"/>
</dbReference>
<dbReference type="GO" id="GO:0080090">
    <property type="term" value="P:regulation of primary metabolic process"/>
    <property type="evidence" value="ECO:0007669"/>
    <property type="project" value="UniProtKB-ARBA"/>
</dbReference>
<dbReference type="CDD" id="cd14014">
    <property type="entry name" value="STKc_PknB_like"/>
    <property type="match status" value="1"/>
</dbReference>
<dbReference type="FunFam" id="1.10.510.10:FF:000021">
    <property type="entry name" value="Serine/threonine protein kinase"/>
    <property type="match status" value="1"/>
</dbReference>
<dbReference type="FunFam" id="3.30.200.20:FF:000035">
    <property type="entry name" value="Serine/threonine protein kinase Stk1"/>
    <property type="match status" value="1"/>
</dbReference>
<dbReference type="Gene3D" id="3.30.200.20">
    <property type="entry name" value="Phosphorylase Kinase, domain 1"/>
    <property type="match status" value="1"/>
</dbReference>
<dbReference type="Gene3D" id="1.10.510.10">
    <property type="entry name" value="Transferase(Phosphotransferase) domain 1"/>
    <property type="match status" value="1"/>
</dbReference>
<dbReference type="InterPro" id="IPR011009">
    <property type="entry name" value="Kinase-like_dom_sf"/>
</dbReference>
<dbReference type="InterPro" id="IPR000719">
    <property type="entry name" value="Prot_kinase_dom"/>
</dbReference>
<dbReference type="InterPro" id="IPR008271">
    <property type="entry name" value="Ser/Thr_kinase_AS"/>
</dbReference>
<dbReference type="PANTHER" id="PTHR43289">
    <property type="entry name" value="MITOGEN-ACTIVATED PROTEIN KINASE KINASE KINASE 20-RELATED"/>
    <property type="match status" value="1"/>
</dbReference>
<dbReference type="PANTHER" id="PTHR43289:SF6">
    <property type="entry name" value="SERINE_THREONINE-PROTEIN KINASE NEKL-3"/>
    <property type="match status" value="1"/>
</dbReference>
<dbReference type="Pfam" id="PF00069">
    <property type="entry name" value="Pkinase"/>
    <property type="match status" value="1"/>
</dbReference>
<dbReference type="SMART" id="SM00220">
    <property type="entry name" value="S_TKc"/>
    <property type="match status" value="1"/>
</dbReference>
<dbReference type="SUPFAM" id="SSF56112">
    <property type="entry name" value="Protein kinase-like (PK-like)"/>
    <property type="match status" value="1"/>
</dbReference>
<dbReference type="PROSITE" id="PS50011">
    <property type="entry name" value="PROTEIN_KINASE_DOM"/>
    <property type="match status" value="1"/>
</dbReference>
<dbReference type="PROSITE" id="PS00108">
    <property type="entry name" value="PROTEIN_KINASE_ST"/>
    <property type="match status" value="1"/>
</dbReference>
<organism>
    <name type="scientific">Mycobacterium bovis (strain ATCC BAA-935 / AF2122/97)</name>
    <dbReference type="NCBI Taxonomy" id="233413"/>
    <lineage>
        <taxon>Bacteria</taxon>
        <taxon>Bacillati</taxon>
        <taxon>Actinomycetota</taxon>
        <taxon>Actinomycetes</taxon>
        <taxon>Mycobacteriales</taxon>
        <taxon>Mycobacteriaceae</taxon>
        <taxon>Mycobacterium</taxon>
        <taxon>Mycobacterium tuberculosis complex</taxon>
    </lineage>
</organism>